<organism>
    <name type="scientific">Pseudomonas syringae pv. syringae (strain B728a)</name>
    <dbReference type="NCBI Taxonomy" id="205918"/>
    <lineage>
        <taxon>Bacteria</taxon>
        <taxon>Pseudomonadati</taxon>
        <taxon>Pseudomonadota</taxon>
        <taxon>Gammaproteobacteria</taxon>
        <taxon>Pseudomonadales</taxon>
        <taxon>Pseudomonadaceae</taxon>
        <taxon>Pseudomonas</taxon>
        <taxon>Pseudomonas syringae</taxon>
    </lineage>
</organism>
<sequence>MSTPTGQPAYVLHSRAYRENSALVDFLTPQGRLRAVLRSAKGKAGSLARPFVPLEVEFRGRGELKNVGRMESAGVATWMTGEALFSGMYLNELLIRLLPAEDPHPAVFEHYAATLLALALGRPLEPLLRSFEWRLLDDLGYGFAMDADINGEPLAIDGMYRLQVDAGLERVYLLQPGLFQGAELLAMSEADWSVPGALSAAKRLMRQALAVHLGGRPLVSRELFRKP</sequence>
<feature type="chain" id="PRO_0000227050" description="DNA repair protein RecO">
    <location>
        <begin position="1"/>
        <end position="227"/>
    </location>
</feature>
<dbReference type="EMBL" id="CP000075">
    <property type="protein sequence ID" value="AAY38979.1"/>
    <property type="molecule type" value="Genomic_DNA"/>
</dbReference>
<dbReference type="RefSeq" id="WP_003405347.1">
    <property type="nucleotide sequence ID" value="NC_007005.1"/>
</dbReference>
<dbReference type="RefSeq" id="YP_237017.1">
    <property type="nucleotide sequence ID" value="NC_007005.1"/>
</dbReference>
<dbReference type="SMR" id="Q4ZPE3"/>
<dbReference type="STRING" id="205918.Psyr_3949"/>
<dbReference type="KEGG" id="psb:Psyr_3949"/>
<dbReference type="PATRIC" id="fig|205918.7.peg.4066"/>
<dbReference type="eggNOG" id="COG1381">
    <property type="taxonomic scope" value="Bacteria"/>
</dbReference>
<dbReference type="HOGENOM" id="CLU_066645_1_0_6"/>
<dbReference type="OrthoDB" id="9804792at2"/>
<dbReference type="Proteomes" id="UP000000426">
    <property type="component" value="Chromosome"/>
</dbReference>
<dbReference type="GO" id="GO:0043590">
    <property type="term" value="C:bacterial nucleoid"/>
    <property type="evidence" value="ECO:0007669"/>
    <property type="project" value="TreeGrafter"/>
</dbReference>
<dbReference type="GO" id="GO:0006310">
    <property type="term" value="P:DNA recombination"/>
    <property type="evidence" value="ECO:0007669"/>
    <property type="project" value="UniProtKB-UniRule"/>
</dbReference>
<dbReference type="GO" id="GO:0006302">
    <property type="term" value="P:double-strand break repair"/>
    <property type="evidence" value="ECO:0007669"/>
    <property type="project" value="TreeGrafter"/>
</dbReference>
<dbReference type="Gene3D" id="2.40.50.140">
    <property type="entry name" value="Nucleic acid-binding proteins"/>
    <property type="match status" value="1"/>
</dbReference>
<dbReference type="Gene3D" id="1.20.1440.120">
    <property type="entry name" value="Recombination protein O, C-terminal domain"/>
    <property type="match status" value="1"/>
</dbReference>
<dbReference type="HAMAP" id="MF_00201">
    <property type="entry name" value="RecO"/>
    <property type="match status" value="1"/>
</dbReference>
<dbReference type="InterPro" id="IPR037278">
    <property type="entry name" value="ARFGAP/RecO"/>
</dbReference>
<dbReference type="InterPro" id="IPR022572">
    <property type="entry name" value="DNA_rep/recomb_RecO_N"/>
</dbReference>
<dbReference type="InterPro" id="IPR012340">
    <property type="entry name" value="NA-bd_OB-fold"/>
</dbReference>
<dbReference type="InterPro" id="IPR003717">
    <property type="entry name" value="RecO"/>
</dbReference>
<dbReference type="InterPro" id="IPR042242">
    <property type="entry name" value="RecO_C"/>
</dbReference>
<dbReference type="NCBIfam" id="TIGR00613">
    <property type="entry name" value="reco"/>
    <property type="match status" value="1"/>
</dbReference>
<dbReference type="PANTHER" id="PTHR33991">
    <property type="entry name" value="DNA REPAIR PROTEIN RECO"/>
    <property type="match status" value="1"/>
</dbReference>
<dbReference type="PANTHER" id="PTHR33991:SF1">
    <property type="entry name" value="DNA REPAIR PROTEIN RECO"/>
    <property type="match status" value="1"/>
</dbReference>
<dbReference type="Pfam" id="PF02565">
    <property type="entry name" value="RecO_C"/>
    <property type="match status" value="1"/>
</dbReference>
<dbReference type="Pfam" id="PF11967">
    <property type="entry name" value="RecO_N"/>
    <property type="match status" value="1"/>
</dbReference>
<dbReference type="SUPFAM" id="SSF57863">
    <property type="entry name" value="ArfGap/RecO-like zinc finger"/>
    <property type="match status" value="1"/>
</dbReference>
<dbReference type="SUPFAM" id="SSF50249">
    <property type="entry name" value="Nucleic acid-binding proteins"/>
    <property type="match status" value="1"/>
</dbReference>
<reference key="1">
    <citation type="journal article" date="2005" name="Proc. Natl. Acad. Sci. U.S.A.">
        <title>Comparison of the complete genome sequences of Pseudomonas syringae pv. syringae B728a and pv. tomato DC3000.</title>
        <authorList>
            <person name="Feil H."/>
            <person name="Feil W.S."/>
            <person name="Chain P."/>
            <person name="Larimer F."/>
            <person name="Dibartolo G."/>
            <person name="Copeland A."/>
            <person name="Lykidis A."/>
            <person name="Trong S."/>
            <person name="Nolan M."/>
            <person name="Goltsman E."/>
            <person name="Thiel J."/>
            <person name="Malfatti S."/>
            <person name="Loper J.E."/>
            <person name="Lapidus A."/>
            <person name="Detter J.C."/>
            <person name="Land M."/>
            <person name="Richardson P.M."/>
            <person name="Kyrpides N.C."/>
            <person name="Ivanova N."/>
            <person name="Lindow S.E."/>
        </authorList>
    </citation>
    <scope>NUCLEOTIDE SEQUENCE [LARGE SCALE GENOMIC DNA]</scope>
    <source>
        <strain>B728a</strain>
    </source>
</reference>
<proteinExistence type="inferred from homology"/>
<comment type="function">
    <text evidence="1">Involved in DNA repair and RecF pathway recombination.</text>
</comment>
<comment type="similarity">
    <text evidence="1">Belongs to the RecO family.</text>
</comment>
<accession>Q4ZPE3</accession>
<gene>
    <name evidence="1" type="primary">recO</name>
    <name type="ordered locus">Psyr_3949</name>
</gene>
<evidence type="ECO:0000255" key="1">
    <source>
        <dbReference type="HAMAP-Rule" id="MF_00201"/>
    </source>
</evidence>
<keyword id="KW-0227">DNA damage</keyword>
<keyword id="KW-0233">DNA recombination</keyword>
<keyword id="KW-0234">DNA repair</keyword>
<name>RECO_PSEU2</name>
<protein>
    <recommendedName>
        <fullName evidence="1">DNA repair protein RecO</fullName>
    </recommendedName>
    <alternativeName>
        <fullName evidence="1">Recombination protein O</fullName>
    </alternativeName>
</protein>